<sequence length="743" mass="87446">MAWGWWKRKRRWWWRKRWTRGRLRRRWPRRSRRRPRRRRVRRRRRWRRGRPRRRLYRRGRRYRRKRKRAKITIRQWQPAMTRRCFIRGHMPALICGWGAYASNYTSHLEDKIVKGPYGGGHATFRFSLQVLCEEHLKHHNYWTRSNQDLELALYYGATIKFYRSPDTDFIVTYQRKSPLGGNILTAPSLHPAEAMLSKNKILIPSLQTKPKGKKTVKVNIPPPTLFVHKWYFQKDICDLTLFNLNVVAADLRFPFCSPQTDNVCITFQVLAAEYNNFLSTTLGTTNESTFIENFLKVAFPDDKPRHSNILNTFRTEGCMSHPQLQKFKPPNTGPGENKYFFTPDGLWGDPIYIYNNGVQQQTAQQIREKIKKNMENYYAKIVEENTIITKGSKAHCHLTGIFSPPFLNIGRVAREFPGLYTDVVYNPWTDKGKGNKIWLDSLTKSDNIYDPRQSILLMADMPLYIMLNGYIDWAKKERNNWGLATQYRLLLTCPYTFPRLYVETNPNYGYVPYSESFGAGQMPDKNPYVPITWRGKWYPHILHQEAVINDIVISGPFTPKDTKPVMQLNMKYSFRFTWGGNPISTQIVKDPCTQPTFEIPGGGNIPRRIQVINPKVLGPSYSFRSFDLRRDMFSGSSLKRVSEQQETSEFLFSGGKRPRIDLPKYVPPEEDFNIQERQQREQRPWTSESESEAEAQEETQAGSVREQLQQQLQEQFQLRRGLKCLFEQLVRTQQGVHVDPCLV</sequence>
<protein>
    <recommendedName>
        <fullName>Capsid protein</fullName>
    </recommendedName>
</protein>
<organism>
    <name type="scientific">Torque teno virus (isolate Human/China/CT39F/2001)</name>
    <name type="common">TTV</name>
    <dbReference type="NCBI Taxonomy" id="486279"/>
    <lineage>
        <taxon>Viruses</taxon>
        <taxon>Viruses incertae sedis</taxon>
        <taxon>Anelloviridae</taxon>
        <taxon>Torque teno virus</taxon>
    </lineage>
</organism>
<organismHost>
    <name type="scientific">Homo sapiens</name>
    <name type="common">Human</name>
    <dbReference type="NCBI Taxonomy" id="9606"/>
</organismHost>
<dbReference type="EMBL" id="AB064604">
    <property type="protein sequence ID" value="BAB79346.1"/>
    <property type="molecule type" value="Genomic_DNA"/>
</dbReference>
<dbReference type="SMR" id="Q8V7G3"/>
<dbReference type="Proteomes" id="UP000008260">
    <property type="component" value="Genome"/>
</dbReference>
<dbReference type="GO" id="GO:0039615">
    <property type="term" value="C:T=1 icosahedral viral capsid"/>
    <property type="evidence" value="ECO:0007669"/>
    <property type="project" value="UniProtKB-KW"/>
</dbReference>
<dbReference type="InterPro" id="IPR004219">
    <property type="entry name" value="TTvirus_Unk"/>
</dbReference>
<dbReference type="Pfam" id="PF02956">
    <property type="entry name" value="TT_ORF1"/>
    <property type="match status" value="1"/>
</dbReference>
<reference key="1">
    <citation type="journal article" date="2002" name="Arch. Virol.">
        <title>Analysis of the entire genomes of thirteen TT virus variants classifiable into the fourth and fifth genetic groups, isolated from viremic infants.</title>
        <authorList>
            <person name="Peng Y.H."/>
            <person name="Nishizawa T."/>
            <person name="Takahashi M."/>
            <person name="Ishikawa T."/>
            <person name="Yoshikawa A."/>
            <person name="Okamoto H."/>
        </authorList>
    </citation>
    <scope>NUCLEOTIDE SEQUENCE [GENOMIC DNA]</scope>
</reference>
<reference key="2">
    <citation type="journal article" date="2007" name="Rev. Med. Virol.">
        <title>Torque teno virus (TTV): current status.</title>
        <authorList>
            <person name="Hino S."/>
            <person name="Miyata H."/>
        </authorList>
    </citation>
    <scope>REVIEW</scope>
</reference>
<proteinExistence type="inferred from homology"/>
<evidence type="ECO:0000250" key="1"/>
<evidence type="ECO:0000256" key="2">
    <source>
        <dbReference type="SAM" id="MobiDB-lite"/>
    </source>
</evidence>
<evidence type="ECO:0000305" key="3"/>
<name>CAPSD_TTVV7</name>
<keyword id="KW-0167">Capsid protein</keyword>
<keyword id="KW-1185">Reference proteome</keyword>
<keyword id="KW-1140">T=1 icosahedral capsid protein</keyword>
<keyword id="KW-0946">Virion</keyword>
<comment type="function">
    <text evidence="1">Self assemble to form an icosahedral capsid.</text>
</comment>
<comment type="subcellular location">
    <subcellularLocation>
        <location evidence="3">Virion</location>
    </subcellularLocation>
</comment>
<comment type="similarity">
    <text evidence="3">Belongs to the anelloviridae capsid protein family.</text>
</comment>
<feature type="chain" id="PRO_0000315332" description="Capsid protein">
    <location>
        <begin position="1"/>
        <end position="743"/>
    </location>
</feature>
<feature type="region of interest" description="Disordered" evidence="2">
    <location>
        <begin position="665"/>
        <end position="706"/>
    </location>
</feature>
<accession>Q8V7G3</accession>
<gene>
    <name type="ORF">ORF1</name>
</gene>